<comment type="subcellular location">
    <subcellularLocation>
        <location evidence="2">Cytoplasm</location>
    </subcellularLocation>
</comment>
<comment type="sequence caution" evidence="2">
    <conflict type="erroneous initiation">
        <sequence resource="EMBL-CDS" id="AAC38134"/>
    </conflict>
</comment>
<keyword id="KW-0963">Cytoplasm</keyword>
<keyword id="KW-0238">DNA-binding</keyword>
<keyword id="KW-1185">Reference proteome</keyword>
<keyword id="KW-0804">Transcription</keyword>
<keyword id="KW-0805">Transcription regulation</keyword>
<dbReference type="EMBL" id="AF002191">
    <property type="protein sequence ID" value="AAC38134.1"/>
    <property type="status" value="ALT_INIT"/>
    <property type="molecule type" value="Genomic_DNA"/>
</dbReference>
<dbReference type="EMBL" id="Y14081">
    <property type="protein sequence ID" value="CAA74470.1"/>
    <property type="molecule type" value="Genomic_DNA"/>
</dbReference>
<dbReference type="EMBL" id="AL009126">
    <property type="protein sequence ID" value="CAB12891.1"/>
    <property type="molecule type" value="Genomic_DNA"/>
</dbReference>
<dbReference type="PIR" id="G69833">
    <property type="entry name" value="G69833"/>
</dbReference>
<dbReference type="RefSeq" id="NP_388932.1">
    <property type="nucleotide sequence ID" value="NC_000964.3"/>
</dbReference>
<dbReference type="RefSeq" id="WP_003245853.1">
    <property type="nucleotide sequence ID" value="NZ_OZ025638.1"/>
</dbReference>
<dbReference type="SMR" id="Q796S4"/>
<dbReference type="FunCoup" id="Q796S4">
    <property type="interactions" value="61"/>
</dbReference>
<dbReference type="STRING" id="224308.BSU10510"/>
<dbReference type="PaxDb" id="224308-BSU10510"/>
<dbReference type="EnsemblBacteria" id="CAB12891">
    <property type="protein sequence ID" value="CAB12891"/>
    <property type="gene ID" value="BSU_10510"/>
</dbReference>
<dbReference type="GeneID" id="939329"/>
<dbReference type="KEGG" id="bsu:BSU10510"/>
<dbReference type="PATRIC" id="fig|224308.179.peg.1130"/>
<dbReference type="eggNOG" id="COG1846">
    <property type="taxonomic scope" value="Bacteria"/>
</dbReference>
<dbReference type="InParanoid" id="Q796S4"/>
<dbReference type="OrthoDB" id="5358347at2"/>
<dbReference type="PhylomeDB" id="Q796S4"/>
<dbReference type="BioCyc" id="BSUB:BSU10510-MONOMER"/>
<dbReference type="Proteomes" id="UP000001570">
    <property type="component" value="Chromosome"/>
</dbReference>
<dbReference type="GO" id="GO:0005737">
    <property type="term" value="C:cytoplasm"/>
    <property type="evidence" value="ECO:0007669"/>
    <property type="project" value="UniProtKB-SubCell"/>
</dbReference>
<dbReference type="GO" id="GO:0003677">
    <property type="term" value="F:DNA binding"/>
    <property type="evidence" value="ECO:0007669"/>
    <property type="project" value="UniProtKB-KW"/>
</dbReference>
<dbReference type="GO" id="GO:0003700">
    <property type="term" value="F:DNA-binding transcription factor activity"/>
    <property type="evidence" value="ECO:0007669"/>
    <property type="project" value="InterPro"/>
</dbReference>
<dbReference type="GO" id="GO:0045892">
    <property type="term" value="P:negative regulation of DNA-templated transcription"/>
    <property type="evidence" value="ECO:0000318"/>
    <property type="project" value="GO_Central"/>
</dbReference>
<dbReference type="Gene3D" id="1.10.10.10">
    <property type="entry name" value="Winged helix-like DNA-binding domain superfamily/Winged helix DNA-binding domain"/>
    <property type="match status" value="1"/>
</dbReference>
<dbReference type="InterPro" id="IPR000835">
    <property type="entry name" value="HTH_MarR-typ"/>
</dbReference>
<dbReference type="InterPro" id="IPR052067">
    <property type="entry name" value="Metal_resp_HTH_trans_reg"/>
</dbReference>
<dbReference type="InterPro" id="IPR023187">
    <property type="entry name" value="Tscrpt_reg_MarR-type_CS"/>
</dbReference>
<dbReference type="InterPro" id="IPR036388">
    <property type="entry name" value="WH-like_DNA-bd_sf"/>
</dbReference>
<dbReference type="InterPro" id="IPR036390">
    <property type="entry name" value="WH_DNA-bd_sf"/>
</dbReference>
<dbReference type="PANTHER" id="PTHR35790">
    <property type="entry name" value="HTH-TYPE TRANSCRIPTIONAL REGULATOR PCHR"/>
    <property type="match status" value="1"/>
</dbReference>
<dbReference type="PANTHER" id="PTHR35790:SF4">
    <property type="entry name" value="HTH-TYPE TRANSCRIPTIONAL REGULATOR PCHR"/>
    <property type="match status" value="1"/>
</dbReference>
<dbReference type="Pfam" id="PF01047">
    <property type="entry name" value="MarR"/>
    <property type="match status" value="1"/>
</dbReference>
<dbReference type="SMART" id="SM00347">
    <property type="entry name" value="HTH_MARR"/>
    <property type="match status" value="1"/>
</dbReference>
<dbReference type="SUPFAM" id="SSF46785">
    <property type="entry name" value="Winged helix' DNA-binding domain"/>
    <property type="match status" value="1"/>
</dbReference>
<dbReference type="PROSITE" id="PS01117">
    <property type="entry name" value="HTH_MARR_1"/>
    <property type="match status" value="1"/>
</dbReference>
<dbReference type="PROSITE" id="PS50995">
    <property type="entry name" value="HTH_MARR_2"/>
    <property type="match status" value="1"/>
</dbReference>
<evidence type="ECO:0000255" key="1">
    <source>
        <dbReference type="PROSITE-ProRule" id="PRU00345"/>
    </source>
</evidence>
<evidence type="ECO:0000305" key="2"/>
<gene>
    <name type="primary">yhjH</name>
    <name type="ordered locus">BSU10510</name>
</gene>
<accession>Q796S4</accession>
<accession>O07562</accession>
<accession>Q799J6</accession>
<proteinExistence type="predicted"/>
<protein>
    <recommendedName>
        <fullName>Uncharacterized HTH-type transcriptional regulator YhjH</fullName>
    </recommendedName>
</protein>
<feature type="chain" id="PRO_0000360679" description="Uncharacterized HTH-type transcriptional regulator YhjH">
    <location>
        <begin position="1"/>
        <end position="175"/>
    </location>
</feature>
<feature type="domain" description="HTH marR-type" evidence="1">
    <location>
        <begin position="10"/>
        <end position="157"/>
    </location>
</feature>
<feature type="DNA-binding region" description="H-T-H motif" evidence="1">
    <location>
        <begin position="68"/>
        <end position="91"/>
    </location>
</feature>
<reference key="1">
    <citation type="journal article" date="1998" name="J. Bacteriol.">
        <title>Characterization of glucose-specific catabolite repression-resistant mutants of Bacillus subtilis: identification of a novel hexose:H+ symporter.</title>
        <authorList>
            <person name="Paulsen I.T."/>
            <person name="Chauvaux S."/>
            <person name="Choi P."/>
            <person name="Saier M.H. Jr."/>
        </authorList>
    </citation>
    <scope>NUCLEOTIDE SEQUENCE [GENOMIC DNA]</scope>
</reference>
<reference key="2">
    <citation type="submission" date="1997-06" db="EMBL/GenBank/DDBJ databases">
        <authorList>
            <person name="Noback M.A."/>
            <person name="Terpstra P."/>
            <person name="Holsappel S."/>
            <person name="Venema G."/>
            <person name="Bron S."/>
        </authorList>
    </citation>
    <scope>NUCLEOTIDE SEQUENCE [GENOMIC DNA]</scope>
    <source>
        <strain>168</strain>
    </source>
</reference>
<reference key="3">
    <citation type="journal article" date="1997" name="Nature">
        <title>The complete genome sequence of the Gram-positive bacterium Bacillus subtilis.</title>
        <authorList>
            <person name="Kunst F."/>
            <person name="Ogasawara N."/>
            <person name="Moszer I."/>
            <person name="Albertini A.M."/>
            <person name="Alloni G."/>
            <person name="Azevedo V."/>
            <person name="Bertero M.G."/>
            <person name="Bessieres P."/>
            <person name="Bolotin A."/>
            <person name="Borchert S."/>
            <person name="Borriss R."/>
            <person name="Boursier L."/>
            <person name="Brans A."/>
            <person name="Braun M."/>
            <person name="Brignell S.C."/>
            <person name="Bron S."/>
            <person name="Brouillet S."/>
            <person name="Bruschi C.V."/>
            <person name="Caldwell B."/>
            <person name="Capuano V."/>
            <person name="Carter N.M."/>
            <person name="Choi S.-K."/>
            <person name="Codani J.-J."/>
            <person name="Connerton I.F."/>
            <person name="Cummings N.J."/>
            <person name="Daniel R.A."/>
            <person name="Denizot F."/>
            <person name="Devine K.M."/>
            <person name="Duesterhoeft A."/>
            <person name="Ehrlich S.D."/>
            <person name="Emmerson P.T."/>
            <person name="Entian K.-D."/>
            <person name="Errington J."/>
            <person name="Fabret C."/>
            <person name="Ferrari E."/>
            <person name="Foulger D."/>
            <person name="Fritz C."/>
            <person name="Fujita M."/>
            <person name="Fujita Y."/>
            <person name="Fuma S."/>
            <person name="Galizzi A."/>
            <person name="Galleron N."/>
            <person name="Ghim S.-Y."/>
            <person name="Glaser P."/>
            <person name="Goffeau A."/>
            <person name="Golightly E.J."/>
            <person name="Grandi G."/>
            <person name="Guiseppi G."/>
            <person name="Guy B.J."/>
            <person name="Haga K."/>
            <person name="Haiech J."/>
            <person name="Harwood C.R."/>
            <person name="Henaut A."/>
            <person name="Hilbert H."/>
            <person name="Holsappel S."/>
            <person name="Hosono S."/>
            <person name="Hullo M.-F."/>
            <person name="Itaya M."/>
            <person name="Jones L.-M."/>
            <person name="Joris B."/>
            <person name="Karamata D."/>
            <person name="Kasahara Y."/>
            <person name="Klaerr-Blanchard M."/>
            <person name="Klein C."/>
            <person name="Kobayashi Y."/>
            <person name="Koetter P."/>
            <person name="Koningstein G."/>
            <person name="Krogh S."/>
            <person name="Kumano M."/>
            <person name="Kurita K."/>
            <person name="Lapidus A."/>
            <person name="Lardinois S."/>
            <person name="Lauber J."/>
            <person name="Lazarevic V."/>
            <person name="Lee S.-M."/>
            <person name="Levine A."/>
            <person name="Liu H."/>
            <person name="Masuda S."/>
            <person name="Mauel C."/>
            <person name="Medigue C."/>
            <person name="Medina N."/>
            <person name="Mellado R.P."/>
            <person name="Mizuno M."/>
            <person name="Moestl D."/>
            <person name="Nakai S."/>
            <person name="Noback M."/>
            <person name="Noone D."/>
            <person name="O'Reilly M."/>
            <person name="Ogawa K."/>
            <person name="Ogiwara A."/>
            <person name="Oudega B."/>
            <person name="Park S.-H."/>
            <person name="Parro V."/>
            <person name="Pohl T.M."/>
            <person name="Portetelle D."/>
            <person name="Porwollik S."/>
            <person name="Prescott A.M."/>
            <person name="Presecan E."/>
            <person name="Pujic P."/>
            <person name="Purnelle B."/>
            <person name="Rapoport G."/>
            <person name="Rey M."/>
            <person name="Reynolds S."/>
            <person name="Rieger M."/>
            <person name="Rivolta C."/>
            <person name="Rocha E."/>
            <person name="Roche B."/>
            <person name="Rose M."/>
            <person name="Sadaie Y."/>
            <person name="Sato T."/>
            <person name="Scanlan E."/>
            <person name="Schleich S."/>
            <person name="Schroeter R."/>
            <person name="Scoffone F."/>
            <person name="Sekiguchi J."/>
            <person name="Sekowska A."/>
            <person name="Seror S.J."/>
            <person name="Serror P."/>
            <person name="Shin B.-S."/>
            <person name="Soldo B."/>
            <person name="Sorokin A."/>
            <person name="Tacconi E."/>
            <person name="Takagi T."/>
            <person name="Takahashi H."/>
            <person name="Takemaru K."/>
            <person name="Takeuchi M."/>
            <person name="Tamakoshi A."/>
            <person name="Tanaka T."/>
            <person name="Terpstra P."/>
            <person name="Tognoni A."/>
            <person name="Tosato V."/>
            <person name="Uchiyama S."/>
            <person name="Vandenbol M."/>
            <person name="Vannier F."/>
            <person name="Vassarotti A."/>
            <person name="Viari A."/>
            <person name="Wambutt R."/>
            <person name="Wedler E."/>
            <person name="Wedler H."/>
            <person name="Weitzenegger T."/>
            <person name="Winters P."/>
            <person name="Wipat A."/>
            <person name="Yamamoto H."/>
            <person name="Yamane K."/>
            <person name="Yasumoto K."/>
            <person name="Yata K."/>
            <person name="Yoshida K."/>
            <person name="Yoshikawa H.-F."/>
            <person name="Zumstein E."/>
            <person name="Yoshikawa H."/>
            <person name="Danchin A."/>
        </authorList>
    </citation>
    <scope>NUCLEOTIDE SEQUENCE [LARGE SCALE GENOMIC DNA]</scope>
    <source>
        <strain>168</strain>
    </source>
</reference>
<sequence>MNTDHTKRNLFELYAELIHQQEKWEGLIKAFLSDELRKLDVEHGSKSQLTMTEIHVLSCVGDNEPINVTSIAEKMNTTKATVSRISTKLLGAGFLHRTQLSDNKKEVYFRLTPAGKKLHSLHKYYHQKAEQRFLSFFDRYTEEEILFAERLFRDLVTKWYPSSEEIEGGLPSIFK</sequence>
<organism>
    <name type="scientific">Bacillus subtilis (strain 168)</name>
    <dbReference type="NCBI Taxonomy" id="224308"/>
    <lineage>
        <taxon>Bacteria</taxon>
        <taxon>Bacillati</taxon>
        <taxon>Bacillota</taxon>
        <taxon>Bacilli</taxon>
        <taxon>Bacillales</taxon>
        <taxon>Bacillaceae</taxon>
        <taxon>Bacillus</taxon>
    </lineage>
</organism>
<name>YHJH_BACSU</name>